<sequence>MEWNTLVLGLLVLSVVASSNNTSTASTPRPSSSTHASTTVKATTVATTSTTTATSTSSTTSAKPGSTTHDPNVMRPHAHNDFYNAHCTSHMYELSLSSFAAWWTMLNALILMGAFCIVLRHCCFQNFTATTTKGY</sequence>
<accession>F5HHQ0</accession>
<feature type="signal peptide" evidence="2">
    <location>
        <begin position="1"/>
        <end position="19"/>
    </location>
</feature>
<feature type="chain" id="PRO_0000416451" description="Envelope glycoprotein N" evidence="2">
    <location>
        <begin position="20"/>
        <end position="135"/>
    </location>
</feature>
<feature type="topological domain" description="Virion surface" evidence="2">
    <location>
        <begin position="20"/>
        <end position="98"/>
    </location>
</feature>
<feature type="transmembrane region" description="Helical" evidence="2">
    <location>
        <begin position="99"/>
        <end position="119"/>
    </location>
</feature>
<feature type="topological domain" description="Intravirion" evidence="2">
    <location>
        <begin position="120"/>
        <end position="135"/>
    </location>
</feature>
<feature type="region of interest" description="Disordered" evidence="3">
    <location>
        <begin position="21"/>
        <end position="73"/>
    </location>
</feature>
<feature type="compositionally biased region" description="Low complexity" evidence="3">
    <location>
        <begin position="21"/>
        <end position="68"/>
    </location>
</feature>
<feature type="disulfide bond" description="Interchain (with gM)" evidence="2">
    <location>
        <position position="87"/>
    </location>
</feature>
<dbReference type="EMBL" id="AY446894">
    <property type="protein sequence ID" value="AAR31725.1"/>
    <property type="molecule type" value="Genomic_DNA"/>
</dbReference>
<dbReference type="RefSeq" id="YP_081521.1">
    <property type="nucleotide sequence ID" value="NC_006273.2"/>
</dbReference>
<dbReference type="DNASU" id="3077417"/>
<dbReference type="GeneID" id="3077417"/>
<dbReference type="KEGG" id="vg:3077417"/>
<dbReference type="Reactome" id="R-HSA-9609690">
    <property type="pathway name" value="HCMV Early Events"/>
</dbReference>
<dbReference type="Reactome" id="R-HSA-9610379">
    <property type="pathway name" value="HCMV Late Events"/>
</dbReference>
<dbReference type="Proteomes" id="UP000000938">
    <property type="component" value="Segment"/>
</dbReference>
<dbReference type="GO" id="GO:0044177">
    <property type="term" value="C:host cell Golgi apparatus"/>
    <property type="evidence" value="ECO:0007669"/>
    <property type="project" value="UniProtKB-SubCell"/>
</dbReference>
<dbReference type="GO" id="GO:0033644">
    <property type="term" value="C:host cell membrane"/>
    <property type="evidence" value="ECO:0007669"/>
    <property type="project" value="UniProtKB-SubCell"/>
</dbReference>
<dbReference type="GO" id="GO:0005886">
    <property type="term" value="C:plasma membrane"/>
    <property type="evidence" value="ECO:0000304"/>
    <property type="project" value="Reactome"/>
</dbReference>
<dbReference type="GO" id="GO:0019031">
    <property type="term" value="C:viral envelope"/>
    <property type="evidence" value="ECO:0000304"/>
    <property type="project" value="Reactome"/>
</dbReference>
<dbReference type="GO" id="GO:0055036">
    <property type="term" value="C:virion membrane"/>
    <property type="evidence" value="ECO:0007669"/>
    <property type="project" value="UniProtKB-SubCell"/>
</dbReference>
<dbReference type="HAMAP" id="MF_04037">
    <property type="entry name" value="HSV_GN"/>
    <property type="match status" value="1"/>
</dbReference>
<dbReference type="InterPro" id="IPR021003">
    <property type="entry name" value="Cytomegalovirus_glycopN_N"/>
</dbReference>
<dbReference type="InterPro" id="IPR005211">
    <property type="entry name" value="Herpes_glycoprotein_N_domain"/>
</dbReference>
<dbReference type="InterPro" id="IPR034707">
    <property type="entry name" value="HSV_GN"/>
</dbReference>
<dbReference type="Pfam" id="PF03554">
    <property type="entry name" value="Herpes_UL73"/>
    <property type="match status" value="1"/>
</dbReference>
<dbReference type="Pfam" id="PF12522">
    <property type="entry name" value="UL73_N"/>
    <property type="match status" value="1"/>
</dbReference>
<reference key="1">
    <citation type="journal article" date="2004" name="J. Gen. Virol.">
        <title>Genetic content of wild-type human cytomegalovirus.</title>
        <authorList>
            <person name="Dolan A."/>
            <person name="Cunningham C."/>
            <person name="Hector R.D."/>
            <person name="Hassan-Walker A.F."/>
            <person name="Lee L."/>
            <person name="Addison C."/>
            <person name="Dargan D.J."/>
            <person name="McGeoch D.J."/>
            <person name="Gatherer D."/>
            <person name="Emery V.C."/>
            <person name="Griffiths P.D."/>
            <person name="Sinzger C."/>
            <person name="McSharry B.P."/>
            <person name="Wilkinson G.W.G."/>
            <person name="Davison A.J."/>
        </authorList>
    </citation>
    <scope>NUCLEOTIDE SEQUENCE [LARGE SCALE GENOMIC DNA]</scope>
</reference>
<keyword id="KW-1015">Disulfide bond</keyword>
<keyword id="KW-1040">Host Golgi apparatus</keyword>
<keyword id="KW-1043">Host membrane</keyword>
<keyword id="KW-0472">Membrane</keyword>
<keyword id="KW-1185">Reference proteome</keyword>
<keyword id="KW-0732">Signal</keyword>
<keyword id="KW-0812">Transmembrane</keyword>
<keyword id="KW-1133">Transmembrane helix</keyword>
<keyword id="KW-0261">Viral envelope protein</keyword>
<keyword id="KW-0946">Virion</keyword>
<organismHost>
    <name type="scientific">Homo sapiens</name>
    <name type="common">Human</name>
    <dbReference type="NCBI Taxonomy" id="9606"/>
</organismHost>
<protein>
    <recommendedName>
        <fullName evidence="2">Envelope glycoprotein N</fullName>
    </recommendedName>
</protein>
<gene>
    <name evidence="2" type="primary">gN</name>
    <name type="synonym">UL73</name>
</gene>
<organism>
    <name type="scientific">Human cytomegalovirus (strain Merlin)</name>
    <name type="common">HHV-5</name>
    <name type="synonym">Human herpesvirus 5</name>
    <dbReference type="NCBI Taxonomy" id="295027"/>
    <lineage>
        <taxon>Viruses</taxon>
        <taxon>Duplodnaviria</taxon>
        <taxon>Heunggongvirae</taxon>
        <taxon>Peploviricota</taxon>
        <taxon>Herviviricetes</taxon>
        <taxon>Herpesvirales</taxon>
        <taxon>Orthoherpesviridae</taxon>
        <taxon>Betaherpesvirinae</taxon>
        <taxon>Cytomegalovirus</taxon>
        <taxon>Cytomegalovirus humanbeta5</taxon>
        <taxon>Human cytomegalovirus</taxon>
    </lineage>
</organism>
<name>GN_HCMVM</name>
<comment type="function">
    <text evidence="2">Envelope glycoprotein necessary for proper maturation of gM and modulation of its membrane fusion activity. Also plays a critical role in virion morphogenesis.</text>
</comment>
<comment type="subunit">
    <text evidence="2">Interacts (via N-terminus) with gM (via N-terminus). The gM-gN heterodimer forms the gCII complex.</text>
</comment>
<comment type="subcellular location">
    <subcellularLocation>
        <location evidence="2">Virion membrane</location>
        <topology evidence="2">Single-pass type I membrane protein</topology>
    </subcellularLocation>
    <subcellularLocation>
        <location evidence="2">Host membrane</location>
        <topology evidence="2">Single-pass type I membrane protein</topology>
    </subcellularLocation>
    <subcellularLocation>
        <location evidence="2">Host Golgi apparatus</location>
        <location evidence="2">Host trans-Golgi network</location>
    </subcellularLocation>
    <text evidence="2">When coexpressed with gM, localizes in the host trans-Golgi network.</text>
</comment>
<comment type="PTM">
    <text evidence="1">O-glycosylated.</text>
</comment>
<comment type="similarity">
    <text evidence="2">Belongs to the herpesviridae glycoprotein N family.</text>
</comment>
<proteinExistence type="inferred from homology"/>
<evidence type="ECO:0000250" key="1">
    <source>
        <dbReference type="UniProtKB" id="P16795"/>
    </source>
</evidence>
<evidence type="ECO:0000255" key="2">
    <source>
        <dbReference type="HAMAP-Rule" id="MF_04037"/>
    </source>
</evidence>
<evidence type="ECO:0000256" key="3">
    <source>
        <dbReference type="SAM" id="MobiDB-lite"/>
    </source>
</evidence>